<organism>
    <name type="scientific">Dictyostelium discoideum</name>
    <name type="common">Social amoeba</name>
    <dbReference type="NCBI Taxonomy" id="44689"/>
    <lineage>
        <taxon>Eukaryota</taxon>
        <taxon>Amoebozoa</taxon>
        <taxon>Evosea</taxon>
        <taxon>Eumycetozoa</taxon>
        <taxon>Dictyostelia</taxon>
        <taxon>Dictyosteliales</taxon>
        <taxon>Dictyosteliaceae</taxon>
        <taxon>Dictyostelium</taxon>
    </lineage>
</organism>
<gene>
    <name evidence="3" type="primary">arpH</name>
    <name evidence="1" type="synonym">actr10</name>
    <name evidence="1" type="synonym">actr11</name>
    <name evidence="1" type="synonym">arp10</name>
    <name evidence="1" type="synonym">arp11</name>
    <name type="ORF">DDB_G0287739</name>
</gene>
<evidence type="ECO:0000250" key="1">
    <source>
        <dbReference type="UniProtKB" id="Q9NZ32"/>
    </source>
</evidence>
<evidence type="ECO:0000255" key="2"/>
<evidence type="ECO:0000312" key="3">
    <source>
        <dbReference type="EMBL" id="EAL63516.1"/>
    </source>
</evidence>
<protein>
    <recommendedName>
        <fullName evidence="1">Actin-related protein 10</fullName>
    </recommendedName>
    <alternativeName>
        <fullName evidence="3">Actin-related protein 11</fullName>
    </alternativeName>
</protein>
<feature type="chain" id="PRO_0000370209" description="Actin-related protein 10">
    <location>
        <begin position="1"/>
        <end position="475"/>
    </location>
</feature>
<accession>Q54JY2</accession>
<dbReference type="EMBL" id="AAFI02000104">
    <property type="protein sequence ID" value="EAL63516.1"/>
    <property type="molecule type" value="Genomic_DNA"/>
</dbReference>
<dbReference type="RefSeq" id="XP_637020.1">
    <property type="nucleotide sequence ID" value="XM_631928.1"/>
</dbReference>
<dbReference type="SMR" id="Q54JY2"/>
<dbReference type="FunCoup" id="Q54JY2">
    <property type="interactions" value="62"/>
</dbReference>
<dbReference type="STRING" id="44689.Q54JY2"/>
<dbReference type="PaxDb" id="44689-DDB0233828"/>
<dbReference type="EnsemblProtists" id="EAL63516">
    <property type="protein sequence ID" value="EAL63516"/>
    <property type="gene ID" value="DDB_G0287739"/>
</dbReference>
<dbReference type="GeneID" id="8626275"/>
<dbReference type="KEGG" id="ddi:DDB_G0287739"/>
<dbReference type="dictyBase" id="DDB_G0287739">
    <property type="gene designation" value="arpH"/>
</dbReference>
<dbReference type="VEuPathDB" id="AmoebaDB:DDB_G0287739"/>
<dbReference type="eggNOG" id="KOG0676">
    <property type="taxonomic scope" value="Eukaryota"/>
</dbReference>
<dbReference type="HOGENOM" id="CLU_027965_2_1_1"/>
<dbReference type="InParanoid" id="Q54JY2"/>
<dbReference type="OMA" id="WERDNDN"/>
<dbReference type="PhylomeDB" id="Q54JY2"/>
<dbReference type="Reactome" id="R-DDI-6798695">
    <property type="pathway name" value="Neutrophil degranulation"/>
</dbReference>
<dbReference type="Reactome" id="R-DDI-6807878">
    <property type="pathway name" value="COPI-mediated anterograde transport"/>
</dbReference>
<dbReference type="PRO" id="PR:Q54JY2"/>
<dbReference type="Proteomes" id="UP000002195">
    <property type="component" value="Chromosome 5"/>
</dbReference>
<dbReference type="GO" id="GO:0005737">
    <property type="term" value="C:cytoplasm"/>
    <property type="evidence" value="ECO:0007669"/>
    <property type="project" value="UniProtKB-KW"/>
</dbReference>
<dbReference type="GO" id="GO:0005869">
    <property type="term" value="C:dynactin complex"/>
    <property type="evidence" value="ECO:0000250"/>
    <property type="project" value="dictyBase"/>
</dbReference>
<dbReference type="GO" id="GO:0007018">
    <property type="term" value="P:microtubule-based movement"/>
    <property type="evidence" value="ECO:0000250"/>
    <property type="project" value="dictyBase"/>
</dbReference>
<dbReference type="CDD" id="cd10207">
    <property type="entry name" value="ASKHA_NBD_Arp10"/>
    <property type="match status" value="1"/>
</dbReference>
<dbReference type="FunFam" id="3.90.640.10:FF:000174">
    <property type="entry name" value="Actin-related protein 10"/>
    <property type="match status" value="1"/>
</dbReference>
<dbReference type="Gene3D" id="3.30.420.40">
    <property type="match status" value="2"/>
</dbReference>
<dbReference type="Gene3D" id="3.90.640.10">
    <property type="entry name" value="Actin, Chain A, domain 4"/>
    <property type="match status" value="1"/>
</dbReference>
<dbReference type="InterPro" id="IPR004000">
    <property type="entry name" value="Actin"/>
</dbReference>
<dbReference type="InterPro" id="IPR043129">
    <property type="entry name" value="ATPase_NBD"/>
</dbReference>
<dbReference type="PANTHER" id="PTHR11937">
    <property type="entry name" value="ACTIN"/>
    <property type="match status" value="1"/>
</dbReference>
<dbReference type="Pfam" id="PF00022">
    <property type="entry name" value="Actin"/>
    <property type="match status" value="1"/>
</dbReference>
<dbReference type="SMART" id="SM00268">
    <property type="entry name" value="ACTIN"/>
    <property type="match status" value="1"/>
</dbReference>
<dbReference type="SUPFAM" id="SSF53067">
    <property type="entry name" value="Actin-like ATPase domain"/>
    <property type="match status" value="2"/>
</dbReference>
<sequence>MDSKSSIVLEIGGRYTKCGYSPESSPRFIIPTNLLPLNISSYLSGGASFDNFKKEITSDNETITTTNQIPTKLPTQSQLKESLFIFFKTIFLNYLLCKSDERKIIIVENIFLPRLFRESMVSVLFEQYRVPLIVFINPTASLIPTLRTTALLIDSGFSETRVLPIYEGVGILKAYKSISLGSESLINQLKQYLQSNITNGIIIDNQNNQSITDSMICNQLLNDKILNSIQLLEDIITRCCFCSFKNKNNNNIEINNINYRISKEYSILIDGNNIRKGLVDVLYKDVNNNDNNNNNKEDDDENLEEGNIATTILNTLLKCEHDQRKPLSHNILLLGGTTMLAGFKKRLVLELHRQLKMNENSIYRNELFGLIGHFQFINHPFENNYLSWLGGSILANALEHVHSKITLESYLNAPSQFKRSQLIPEWEKLTNINNYTQIAQATMGTTINPLQFNSTSSLFSPFTSSSDLSSHLNKD</sequence>
<name>ARP10_DICDI</name>
<reference key="1">
    <citation type="journal article" date="2005" name="Nature">
        <title>The genome of the social amoeba Dictyostelium discoideum.</title>
        <authorList>
            <person name="Eichinger L."/>
            <person name="Pachebat J.A."/>
            <person name="Gloeckner G."/>
            <person name="Rajandream M.A."/>
            <person name="Sucgang R."/>
            <person name="Berriman M."/>
            <person name="Song J."/>
            <person name="Olsen R."/>
            <person name="Szafranski K."/>
            <person name="Xu Q."/>
            <person name="Tunggal B."/>
            <person name="Kummerfeld S."/>
            <person name="Madera M."/>
            <person name="Konfortov B.A."/>
            <person name="Rivero F."/>
            <person name="Bankier A.T."/>
            <person name="Lehmann R."/>
            <person name="Hamlin N."/>
            <person name="Davies R."/>
            <person name="Gaudet P."/>
            <person name="Fey P."/>
            <person name="Pilcher K."/>
            <person name="Chen G."/>
            <person name="Saunders D."/>
            <person name="Sodergren E.J."/>
            <person name="Davis P."/>
            <person name="Kerhornou A."/>
            <person name="Nie X."/>
            <person name="Hall N."/>
            <person name="Anjard C."/>
            <person name="Hemphill L."/>
            <person name="Bason N."/>
            <person name="Farbrother P."/>
            <person name="Desany B."/>
            <person name="Just E."/>
            <person name="Morio T."/>
            <person name="Rost R."/>
            <person name="Churcher C.M."/>
            <person name="Cooper J."/>
            <person name="Haydock S."/>
            <person name="van Driessche N."/>
            <person name="Cronin A."/>
            <person name="Goodhead I."/>
            <person name="Muzny D.M."/>
            <person name="Mourier T."/>
            <person name="Pain A."/>
            <person name="Lu M."/>
            <person name="Harper D."/>
            <person name="Lindsay R."/>
            <person name="Hauser H."/>
            <person name="James K.D."/>
            <person name="Quiles M."/>
            <person name="Madan Babu M."/>
            <person name="Saito T."/>
            <person name="Buchrieser C."/>
            <person name="Wardroper A."/>
            <person name="Felder M."/>
            <person name="Thangavelu M."/>
            <person name="Johnson D."/>
            <person name="Knights A."/>
            <person name="Loulseged H."/>
            <person name="Mungall K.L."/>
            <person name="Oliver K."/>
            <person name="Price C."/>
            <person name="Quail M.A."/>
            <person name="Urushihara H."/>
            <person name="Hernandez J."/>
            <person name="Rabbinowitsch E."/>
            <person name="Steffen D."/>
            <person name="Sanders M."/>
            <person name="Ma J."/>
            <person name="Kohara Y."/>
            <person name="Sharp S."/>
            <person name="Simmonds M.N."/>
            <person name="Spiegler S."/>
            <person name="Tivey A."/>
            <person name="Sugano S."/>
            <person name="White B."/>
            <person name="Walker D."/>
            <person name="Woodward J.R."/>
            <person name="Winckler T."/>
            <person name="Tanaka Y."/>
            <person name="Shaulsky G."/>
            <person name="Schleicher M."/>
            <person name="Weinstock G.M."/>
            <person name="Rosenthal A."/>
            <person name="Cox E.C."/>
            <person name="Chisholm R.L."/>
            <person name="Gibbs R.A."/>
            <person name="Loomis W.F."/>
            <person name="Platzer M."/>
            <person name="Kay R.R."/>
            <person name="Williams J.G."/>
            <person name="Dear P.H."/>
            <person name="Noegel A.A."/>
            <person name="Barrell B.G."/>
            <person name="Kuspa A."/>
        </authorList>
    </citation>
    <scope>NUCLEOTIDE SEQUENCE [LARGE SCALE GENOMIC DNA]</scope>
    <source>
        <strain>AX4</strain>
    </source>
</reference>
<comment type="subcellular location">
    <subcellularLocation>
        <location evidence="1">Cytoplasm</location>
        <location evidence="1">Cytoskeleton</location>
    </subcellularLocation>
</comment>
<comment type="similarity">
    <text evidence="2">Belongs to the actin family.</text>
</comment>
<keyword id="KW-0963">Cytoplasm</keyword>
<keyword id="KW-0206">Cytoskeleton</keyword>
<keyword id="KW-1185">Reference proteome</keyword>
<proteinExistence type="inferred from homology"/>